<sequence>MLLHIVARGRIGRGPEADLVDRYIKRIGWPTRITELPDSGGRLPPRDPGTVLVMLDEKGEQLGSMAFAEKLGRWRDDGRREVRFLIGAADGFDEAQRREADLLFAFGKATWPHLLARAMLAEQLWRATSILAGHPYHREG</sequence>
<name>RLMH_RHIWR</name>
<protein>
    <recommendedName>
        <fullName evidence="1">Ribosomal RNA large subunit methyltransferase H</fullName>
        <ecNumber evidence="1">2.1.1.177</ecNumber>
    </recommendedName>
    <alternativeName>
        <fullName evidence="1">23S rRNA (pseudouridine1915-N3)-methyltransferase</fullName>
    </alternativeName>
    <alternativeName>
        <fullName evidence="1">23S rRNA m3Psi1915 methyltransferase</fullName>
    </alternativeName>
    <alternativeName>
        <fullName evidence="1">rRNA (pseudouridine-N3-)-methyltransferase RlmH</fullName>
    </alternativeName>
</protein>
<feature type="chain" id="PRO_1000061845" description="Ribosomal RNA large subunit methyltransferase H">
    <location>
        <begin position="1"/>
        <end position="140"/>
    </location>
</feature>
<feature type="binding site" evidence="1">
    <location>
        <position position="55"/>
    </location>
    <ligand>
        <name>S-adenosyl-L-methionine</name>
        <dbReference type="ChEBI" id="CHEBI:59789"/>
    </ligand>
</feature>
<feature type="binding site" evidence="1">
    <location>
        <position position="87"/>
    </location>
    <ligand>
        <name>S-adenosyl-L-methionine</name>
        <dbReference type="ChEBI" id="CHEBI:59789"/>
    </ligand>
</feature>
<comment type="function">
    <text evidence="1">Specifically methylates the pseudouridine at position 1915 (m3Psi1915) in 23S rRNA.</text>
</comment>
<comment type="catalytic activity">
    <reaction evidence="1">
        <text>pseudouridine(1915) in 23S rRNA + S-adenosyl-L-methionine = N(3)-methylpseudouridine(1915) in 23S rRNA + S-adenosyl-L-homocysteine + H(+)</text>
        <dbReference type="Rhea" id="RHEA:42752"/>
        <dbReference type="Rhea" id="RHEA-COMP:10221"/>
        <dbReference type="Rhea" id="RHEA-COMP:10222"/>
        <dbReference type="ChEBI" id="CHEBI:15378"/>
        <dbReference type="ChEBI" id="CHEBI:57856"/>
        <dbReference type="ChEBI" id="CHEBI:59789"/>
        <dbReference type="ChEBI" id="CHEBI:65314"/>
        <dbReference type="ChEBI" id="CHEBI:74486"/>
        <dbReference type="EC" id="2.1.1.177"/>
    </reaction>
</comment>
<comment type="subunit">
    <text evidence="1">Homodimer.</text>
</comment>
<comment type="subcellular location">
    <subcellularLocation>
        <location evidence="1">Cytoplasm</location>
    </subcellularLocation>
</comment>
<comment type="similarity">
    <text evidence="1">Belongs to the RNA methyltransferase RlmH family.</text>
</comment>
<evidence type="ECO:0000255" key="1">
    <source>
        <dbReference type="HAMAP-Rule" id="MF_00658"/>
    </source>
</evidence>
<reference key="1">
    <citation type="journal article" date="2010" name="J. Bacteriol.">
        <title>Genome sequence of the dioxin-mineralizing bacterium Sphingomonas wittichii RW1.</title>
        <authorList>
            <person name="Miller T.R."/>
            <person name="Delcher A.L."/>
            <person name="Salzberg S.L."/>
            <person name="Saunders E."/>
            <person name="Detter J.C."/>
            <person name="Halden R.U."/>
        </authorList>
    </citation>
    <scope>NUCLEOTIDE SEQUENCE [LARGE SCALE GENOMIC DNA]</scope>
    <source>
        <strain>DSM 6014 / CCUG 31198 / JCM 15750 / NBRC 105917 / EY 4224 / RW1</strain>
    </source>
</reference>
<keyword id="KW-0963">Cytoplasm</keyword>
<keyword id="KW-0489">Methyltransferase</keyword>
<keyword id="KW-1185">Reference proteome</keyword>
<keyword id="KW-0698">rRNA processing</keyword>
<keyword id="KW-0949">S-adenosyl-L-methionine</keyword>
<keyword id="KW-0808">Transferase</keyword>
<proteinExistence type="inferred from homology"/>
<gene>
    <name evidence="1" type="primary">rlmH</name>
    <name type="ordered locus">Swit_2545</name>
</gene>
<accession>A5V9D8</accession>
<organism>
    <name type="scientific">Rhizorhabdus wittichii (strain DSM 6014 / CCUG 31198 / JCM 15750 / NBRC 105917 / EY 4224 / RW1)</name>
    <name type="common">Sphingomonas wittichii</name>
    <dbReference type="NCBI Taxonomy" id="392499"/>
    <lineage>
        <taxon>Bacteria</taxon>
        <taxon>Pseudomonadati</taxon>
        <taxon>Pseudomonadota</taxon>
        <taxon>Alphaproteobacteria</taxon>
        <taxon>Sphingomonadales</taxon>
        <taxon>Sphingomonadaceae</taxon>
        <taxon>Rhizorhabdus</taxon>
    </lineage>
</organism>
<dbReference type="EC" id="2.1.1.177" evidence="1"/>
<dbReference type="EMBL" id="CP000699">
    <property type="protein sequence ID" value="ABQ68904.1"/>
    <property type="molecule type" value="Genomic_DNA"/>
</dbReference>
<dbReference type="SMR" id="A5V9D8"/>
<dbReference type="STRING" id="392499.Swit_2545"/>
<dbReference type="PaxDb" id="392499-Swit_2545"/>
<dbReference type="KEGG" id="swi:Swit_2545"/>
<dbReference type="eggNOG" id="COG1576">
    <property type="taxonomic scope" value="Bacteria"/>
</dbReference>
<dbReference type="HOGENOM" id="CLU_100552_1_1_5"/>
<dbReference type="OrthoDB" id="9806643at2"/>
<dbReference type="Proteomes" id="UP000001989">
    <property type="component" value="Chromosome"/>
</dbReference>
<dbReference type="GO" id="GO:0005737">
    <property type="term" value="C:cytoplasm"/>
    <property type="evidence" value="ECO:0007669"/>
    <property type="project" value="UniProtKB-SubCell"/>
</dbReference>
<dbReference type="GO" id="GO:0070038">
    <property type="term" value="F:rRNA (pseudouridine-N3-)-methyltransferase activity"/>
    <property type="evidence" value="ECO:0007669"/>
    <property type="project" value="UniProtKB-UniRule"/>
</dbReference>
<dbReference type="CDD" id="cd18081">
    <property type="entry name" value="RlmH-like"/>
    <property type="match status" value="1"/>
</dbReference>
<dbReference type="Gene3D" id="3.40.1280.10">
    <property type="match status" value="1"/>
</dbReference>
<dbReference type="HAMAP" id="MF_00658">
    <property type="entry name" value="23SrRNA_methyltr_H"/>
    <property type="match status" value="1"/>
</dbReference>
<dbReference type="InterPro" id="IPR029028">
    <property type="entry name" value="Alpha/beta_knot_MTases"/>
</dbReference>
<dbReference type="InterPro" id="IPR003742">
    <property type="entry name" value="RlmH-like"/>
</dbReference>
<dbReference type="InterPro" id="IPR029026">
    <property type="entry name" value="tRNA_m1G_MTases_N"/>
</dbReference>
<dbReference type="PANTHER" id="PTHR33603">
    <property type="entry name" value="METHYLTRANSFERASE"/>
    <property type="match status" value="1"/>
</dbReference>
<dbReference type="PANTHER" id="PTHR33603:SF1">
    <property type="entry name" value="RIBOSOMAL RNA LARGE SUBUNIT METHYLTRANSFERASE H"/>
    <property type="match status" value="1"/>
</dbReference>
<dbReference type="Pfam" id="PF02590">
    <property type="entry name" value="SPOUT_MTase"/>
    <property type="match status" value="1"/>
</dbReference>
<dbReference type="PIRSF" id="PIRSF004505">
    <property type="entry name" value="MT_bac"/>
    <property type="match status" value="1"/>
</dbReference>
<dbReference type="SUPFAM" id="SSF75217">
    <property type="entry name" value="alpha/beta knot"/>
    <property type="match status" value="1"/>
</dbReference>